<gene>
    <name evidence="1" type="primary">rpoC2</name>
    <name type="ordered locus">PMT_1505</name>
</gene>
<comment type="function">
    <text evidence="1">DNA-dependent RNA polymerase catalyzes the transcription of DNA into RNA using the four ribonucleoside triphosphates as substrates.</text>
</comment>
<comment type="catalytic activity">
    <reaction evidence="1">
        <text>RNA(n) + a ribonucleoside 5'-triphosphate = RNA(n+1) + diphosphate</text>
        <dbReference type="Rhea" id="RHEA:21248"/>
        <dbReference type="Rhea" id="RHEA-COMP:14527"/>
        <dbReference type="Rhea" id="RHEA-COMP:17342"/>
        <dbReference type="ChEBI" id="CHEBI:33019"/>
        <dbReference type="ChEBI" id="CHEBI:61557"/>
        <dbReference type="ChEBI" id="CHEBI:140395"/>
        <dbReference type="EC" id="2.7.7.6"/>
    </reaction>
</comment>
<comment type="cofactor">
    <cofactor evidence="1">
        <name>Zn(2+)</name>
        <dbReference type="ChEBI" id="CHEBI:29105"/>
    </cofactor>
    <text evidence="1">Binds 1 Zn(2+) ion per subunit.</text>
</comment>
<comment type="subunit">
    <text evidence="1">In cyanobacteria the RNAP catalytic core is composed of 2 alpha, 1 beta, 1 beta', 1 gamma and 1 omega subunit. When a sigma factor is associated with the core the holoenzyme is formed, which can initiate transcription.</text>
</comment>
<comment type="similarity">
    <text evidence="1">Belongs to the RNA polymerase beta' chain family. RpoC2 subfamily.</text>
</comment>
<sequence>MTSTSPKSRKPSTKTTKSKSKSKSKSKAAKAAAAGASPALARTPPQFRNRVIDKKALKQLVAWAYKTHGTAVTASMADNLKDLGFRYATQAAVSISVEDLKVPEAKQDLLGQAEAQITATEECYRLGEITEVERHTKVIDTWTETNERLVDAVKKNFNQNDPLNSVWMMANSGARGNMSQVRQLVGMRGLMANPQGEIIDLPIRTNFREGLTVTEYVISSYGARKGLVDTALRTADSGYLTRRLVDVAQDVIVREDDCGTTRGIIVKAEDGGFGSRLVGRLTAEQVVNVDGEILAERNTEIDPPLSKRFEKAAITEVMVRSPLTCEANRSVCRKCYGWALAHNELADLGEAVGIIAAQSIGEPGTQLTMRTFHTGGVSTAETGVVRSTVAGTVEFGPKARVRGYRTPHGLEAQQSEVDFTLTVKPSGKGRAQRIDITTGSLLFVSDGQEIEADVTVVQIAAVAVKKSVEKATKDVICDLAGQVRYEQVIQPREVKDRQGNITLKAQRLGRLWVLAGDVYNLPPNAEPVVQGNVKVERGQVLAEASQASEFGGEVRLRDSIGDSREVQIVTTSMTMKDFKLLGESTHSGELWHLEAKDGTRYRLNTIPGSKIGNGEVVAELADDRFRTQTGGLVRFAPGLAIKKARSAKNGFEVNKGGTLLWIPQETHEINKDISLLMIEDGQWIEAGTEVVKDIFSQTAGIVTVTQKNDILREIIVRSGSFHLCTETKALERFTGDGQIVNPGETIAKGINSEAMVFVQTVDTPEGTGLLLRPMEEYTIPNEAQLPELTHVKQPKGPHLGIKATQRLAFKDGELIKSVEGVELLKTQLILETFDTTPQMTVDVEAVRDKRAKTIERLRLVILESILVRRDTISDSSHGSTHTELQIEDGQSVKASDVVATTQILCKQEGIAQLPVVQEGDPVRRLIVERDEDTITVTTNGSPLVEVGQRLVDGDSLAKDEPSSCCGEVEEVDGKAITLRLGRPYMVSPDSVLHVRDGDLVQRGDGLALLVFERQKTGDIVQGLPRIEELLEARRPRESAVLCKKPGTVEIKQGEDDESITVTVIEADDAIGEYPILLGRNVMVSNGQQVHAGELLTDGPINPHELLDCFFEDLRGRKPLMDAAQEAIAKLQHRLVTEVQNVYKSQGVSIDDKHIEVIVRQMTSKVRIEDAGDTTLLPGELIELRQVEDTNQAMAITGGAPSEFTPVLLGITKASLNTDSFISAASFQETTRVLTEAAIEGKSDWLRGLKENVIIGRLIPAGTGFSGFQEELRAEAGPHPDILAEDPAGYRRMQNLRPDYTVDMPAAPAASSTAVLADPSDADLEATRSRHGIDPAASNFAAFVRPTGENELEEEQLPDPSALEGLQQEGLLTEE</sequence>
<evidence type="ECO:0000255" key="1">
    <source>
        <dbReference type="HAMAP-Rule" id="MF_01324"/>
    </source>
</evidence>
<evidence type="ECO:0000256" key="2">
    <source>
        <dbReference type="SAM" id="MobiDB-lite"/>
    </source>
</evidence>
<name>RPOC2_PROMM</name>
<feature type="chain" id="PRO_0000067906" description="DNA-directed RNA polymerase subunit beta'">
    <location>
        <begin position="1"/>
        <end position="1374"/>
    </location>
</feature>
<feature type="region of interest" description="Disordered" evidence="2">
    <location>
        <begin position="1"/>
        <end position="47"/>
    </location>
</feature>
<feature type="region of interest" description="Disordered" evidence="2">
    <location>
        <begin position="1344"/>
        <end position="1374"/>
    </location>
</feature>
<feature type="compositionally biased region" description="Basic residues" evidence="2">
    <location>
        <begin position="7"/>
        <end position="28"/>
    </location>
</feature>
<feature type="compositionally biased region" description="Low complexity" evidence="2">
    <location>
        <begin position="29"/>
        <end position="39"/>
    </location>
</feature>
<feature type="compositionally biased region" description="Low complexity" evidence="2">
    <location>
        <begin position="1362"/>
        <end position="1374"/>
    </location>
</feature>
<feature type="binding site" evidence="1">
    <location>
        <position position="258"/>
    </location>
    <ligand>
        <name>Zn(2+)</name>
        <dbReference type="ChEBI" id="CHEBI:29105"/>
    </ligand>
</feature>
<feature type="binding site" evidence="1">
    <location>
        <position position="325"/>
    </location>
    <ligand>
        <name>Zn(2+)</name>
        <dbReference type="ChEBI" id="CHEBI:29105"/>
    </ligand>
</feature>
<feature type="binding site" evidence="1">
    <location>
        <position position="332"/>
    </location>
    <ligand>
        <name>Zn(2+)</name>
        <dbReference type="ChEBI" id="CHEBI:29105"/>
    </ligand>
</feature>
<feature type="binding site" evidence="1">
    <location>
        <position position="335"/>
    </location>
    <ligand>
        <name>Zn(2+)</name>
        <dbReference type="ChEBI" id="CHEBI:29105"/>
    </ligand>
</feature>
<accession>Q7V5P3</accession>
<reference key="1">
    <citation type="journal article" date="2003" name="Nature">
        <title>Genome divergence in two Prochlorococcus ecotypes reflects oceanic niche differentiation.</title>
        <authorList>
            <person name="Rocap G."/>
            <person name="Larimer F.W."/>
            <person name="Lamerdin J.E."/>
            <person name="Malfatti S."/>
            <person name="Chain P."/>
            <person name="Ahlgren N.A."/>
            <person name="Arellano A."/>
            <person name="Coleman M."/>
            <person name="Hauser L."/>
            <person name="Hess W.R."/>
            <person name="Johnson Z.I."/>
            <person name="Land M.L."/>
            <person name="Lindell D."/>
            <person name="Post A.F."/>
            <person name="Regala W."/>
            <person name="Shah M."/>
            <person name="Shaw S.L."/>
            <person name="Steglich C."/>
            <person name="Sullivan M.B."/>
            <person name="Ting C.S."/>
            <person name="Tolonen A."/>
            <person name="Webb E.A."/>
            <person name="Zinser E.R."/>
            <person name="Chisholm S.W."/>
        </authorList>
    </citation>
    <scope>NUCLEOTIDE SEQUENCE [LARGE SCALE GENOMIC DNA]</scope>
    <source>
        <strain>MIT 9313</strain>
    </source>
</reference>
<dbReference type="EC" id="2.7.7.6" evidence="1"/>
<dbReference type="EMBL" id="BX548175">
    <property type="protein sequence ID" value="CAE21680.1"/>
    <property type="molecule type" value="Genomic_DNA"/>
</dbReference>
<dbReference type="RefSeq" id="WP_011130873.1">
    <property type="nucleotide sequence ID" value="NC_005071.1"/>
</dbReference>
<dbReference type="SMR" id="Q7V5P3"/>
<dbReference type="KEGG" id="pmt:PMT_1505"/>
<dbReference type="eggNOG" id="COG0086">
    <property type="taxonomic scope" value="Bacteria"/>
</dbReference>
<dbReference type="HOGENOM" id="CLU_000524_1_0_3"/>
<dbReference type="OrthoDB" id="9815296at2"/>
<dbReference type="Proteomes" id="UP000001423">
    <property type="component" value="Chromosome"/>
</dbReference>
<dbReference type="GO" id="GO:0000428">
    <property type="term" value="C:DNA-directed RNA polymerase complex"/>
    <property type="evidence" value="ECO:0007669"/>
    <property type="project" value="UniProtKB-KW"/>
</dbReference>
<dbReference type="GO" id="GO:0003677">
    <property type="term" value="F:DNA binding"/>
    <property type="evidence" value="ECO:0007669"/>
    <property type="project" value="UniProtKB-UniRule"/>
</dbReference>
<dbReference type="GO" id="GO:0003899">
    <property type="term" value="F:DNA-directed RNA polymerase activity"/>
    <property type="evidence" value="ECO:0007669"/>
    <property type="project" value="UniProtKB-UniRule"/>
</dbReference>
<dbReference type="GO" id="GO:0008270">
    <property type="term" value="F:zinc ion binding"/>
    <property type="evidence" value="ECO:0007669"/>
    <property type="project" value="UniProtKB-UniRule"/>
</dbReference>
<dbReference type="GO" id="GO:0006351">
    <property type="term" value="P:DNA-templated transcription"/>
    <property type="evidence" value="ECO:0007669"/>
    <property type="project" value="UniProtKB-UniRule"/>
</dbReference>
<dbReference type="CDD" id="cd02655">
    <property type="entry name" value="RNAP_beta'_C"/>
    <property type="match status" value="1"/>
</dbReference>
<dbReference type="FunFam" id="1.10.150.390:FF:000002">
    <property type="entry name" value="DNA-directed RNA polymerase subunit beta"/>
    <property type="match status" value="1"/>
</dbReference>
<dbReference type="Gene3D" id="1.10.132.30">
    <property type="match status" value="1"/>
</dbReference>
<dbReference type="Gene3D" id="1.10.150.390">
    <property type="match status" value="1"/>
</dbReference>
<dbReference type="Gene3D" id="1.10.1790.20">
    <property type="match status" value="1"/>
</dbReference>
<dbReference type="Gene3D" id="2.40.50.100">
    <property type="match status" value="1"/>
</dbReference>
<dbReference type="Gene3D" id="1.10.274.100">
    <property type="entry name" value="RNA polymerase Rpb1, domain 3"/>
    <property type="match status" value="1"/>
</dbReference>
<dbReference type="HAMAP" id="MF_01324">
    <property type="entry name" value="RNApol_bact_RpoC2"/>
    <property type="match status" value="1"/>
</dbReference>
<dbReference type="InterPro" id="IPR012756">
    <property type="entry name" value="DNA-dir_RpoC2_beta_pp"/>
</dbReference>
<dbReference type="InterPro" id="IPR045867">
    <property type="entry name" value="DNA-dir_RpoC_beta_prime"/>
</dbReference>
<dbReference type="InterPro" id="IPR007066">
    <property type="entry name" value="RNA_pol_Rpb1_3"/>
</dbReference>
<dbReference type="InterPro" id="IPR042102">
    <property type="entry name" value="RNA_pol_Rpb1_3_sf"/>
</dbReference>
<dbReference type="InterPro" id="IPR007083">
    <property type="entry name" value="RNA_pol_Rpb1_4"/>
</dbReference>
<dbReference type="InterPro" id="IPR007081">
    <property type="entry name" value="RNA_pol_Rpb1_5"/>
</dbReference>
<dbReference type="InterPro" id="IPR038120">
    <property type="entry name" value="Rpb1_funnel_sf"/>
</dbReference>
<dbReference type="NCBIfam" id="NF002724">
    <property type="entry name" value="PRK02597.1"/>
    <property type="match status" value="1"/>
</dbReference>
<dbReference type="NCBIfam" id="TIGR02388">
    <property type="entry name" value="rpoC2_cyan"/>
    <property type="match status" value="1"/>
</dbReference>
<dbReference type="PANTHER" id="PTHR19376">
    <property type="entry name" value="DNA-DIRECTED RNA POLYMERASE"/>
    <property type="match status" value="1"/>
</dbReference>
<dbReference type="PANTHER" id="PTHR19376:SF54">
    <property type="entry name" value="DNA-DIRECTED RNA POLYMERASE SUBUNIT BETA"/>
    <property type="match status" value="1"/>
</dbReference>
<dbReference type="Pfam" id="PF04983">
    <property type="entry name" value="RNA_pol_Rpb1_3"/>
    <property type="match status" value="1"/>
</dbReference>
<dbReference type="Pfam" id="PF05000">
    <property type="entry name" value="RNA_pol_Rpb1_4"/>
    <property type="match status" value="1"/>
</dbReference>
<dbReference type="Pfam" id="PF04998">
    <property type="entry name" value="RNA_pol_Rpb1_5"/>
    <property type="match status" value="2"/>
</dbReference>
<dbReference type="SUPFAM" id="SSF64484">
    <property type="entry name" value="beta and beta-prime subunits of DNA dependent RNA-polymerase"/>
    <property type="match status" value="1"/>
</dbReference>
<protein>
    <recommendedName>
        <fullName evidence="1">DNA-directed RNA polymerase subunit beta'</fullName>
        <shortName evidence="1">RNAP subunit beta'</shortName>
        <ecNumber evidence="1">2.7.7.6</ecNumber>
    </recommendedName>
    <alternativeName>
        <fullName evidence="1">RNA polymerase subunit beta'</fullName>
    </alternativeName>
    <alternativeName>
        <fullName evidence="1">Transcriptase subunit beta'</fullName>
    </alternativeName>
</protein>
<organism>
    <name type="scientific">Prochlorococcus marinus (strain MIT 9313)</name>
    <dbReference type="NCBI Taxonomy" id="74547"/>
    <lineage>
        <taxon>Bacteria</taxon>
        <taxon>Bacillati</taxon>
        <taxon>Cyanobacteriota</taxon>
        <taxon>Cyanophyceae</taxon>
        <taxon>Synechococcales</taxon>
        <taxon>Prochlorococcaceae</taxon>
        <taxon>Prochlorococcus</taxon>
    </lineage>
</organism>
<keyword id="KW-0240">DNA-directed RNA polymerase</keyword>
<keyword id="KW-0479">Metal-binding</keyword>
<keyword id="KW-0548">Nucleotidyltransferase</keyword>
<keyword id="KW-1185">Reference proteome</keyword>
<keyword id="KW-0804">Transcription</keyword>
<keyword id="KW-0808">Transferase</keyword>
<keyword id="KW-0862">Zinc</keyword>
<proteinExistence type="inferred from homology"/>